<gene>
    <name type="primary">CTSZ</name>
</gene>
<name>CATZ_BOVIN</name>
<dbReference type="EC" id="3.4.18.1" evidence="3"/>
<dbReference type="EMBL" id="BC122603">
    <property type="protein sequence ID" value="AAI22604.1"/>
    <property type="molecule type" value="mRNA"/>
</dbReference>
<dbReference type="EMBL" id="X01809">
    <property type="protein sequence ID" value="CAA25952.1"/>
    <property type="molecule type" value="mRNA"/>
</dbReference>
<dbReference type="PIR" id="A29172">
    <property type="entry name" value="A29172"/>
</dbReference>
<dbReference type="RefSeq" id="NP_001071303.1">
    <property type="nucleotide sequence ID" value="NM_001077835.1"/>
</dbReference>
<dbReference type="SMR" id="P05689"/>
<dbReference type="FunCoup" id="P05689">
    <property type="interactions" value="800"/>
</dbReference>
<dbReference type="STRING" id="9913.ENSBTAP00000064366"/>
<dbReference type="MEROPS" id="C01.013"/>
<dbReference type="GlyCosmos" id="P05689">
    <property type="glycosylation" value="2 sites, No reported glycans"/>
</dbReference>
<dbReference type="GlyGen" id="P05689">
    <property type="glycosylation" value="2 sites"/>
</dbReference>
<dbReference type="PaxDb" id="9913-ENSBTAP00000025007"/>
<dbReference type="PeptideAtlas" id="P05689"/>
<dbReference type="Ensembl" id="ENSBTAT00000025007.6">
    <property type="protein sequence ID" value="ENSBTAP00000025007.5"/>
    <property type="gene ID" value="ENSBTAG00000018784.6"/>
</dbReference>
<dbReference type="GeneID" id="404187"/>
<dbReference type="KEGG" id="bta:404187"/>
<dbReference type="CTD" id="1522"/>
<dbReference type="VEuPathDB" id="HostDB:ENSBTAG00000018784"/>
<dbReference type="VGNC" id="VGNC:27820">
    <property type="gene designation" value="CTSZ"/>
</dbReference>
<dbReference type="eggNOG" id="KOG1543">
    <property type="taxonomic scope" value="Eukaryota"/>
</dbReference>
<dbReference type="GeneTree" id="ENSGT00940000155569"/>
<dbReference type="InParanoid" id="P05689"/>
<dbReference type="OMA" id="QSWDWRN"/>
<dbReference type="OrthoDB" id="190265at2759"/>
<dbReference type="BRENDA" id="3.4.18.1">
    <property type="organism ID" value="908"/>
</dbReference>
<dbReference type="Reactome" id="R-BTA-2022377">
    <property type="pathway name" value="Metabolism of Angiotensinogen to Angiotensins"/>
</dbReference>
<dbReference type="Reactome" id="R-BTA-204005">
    <property type="pathway name" value="COPII-mediated vesicle transport"/>
</dbReference>
<dbReference type="Reactome" id="R-BTA-432720">
    <property type="pathway name" value="Lysosome Vesicle Biogenesis"/>
</dbReference>
<dbReference type="Reactome" id="R-BTA-5694530">
    <property type="pathway name" value="Cargo concentration in the ER"/>
</dbReference>
<dbReference type="Reactome" id="R-BTA-6798695">
    <property type="pathway name" value="Neutrophil degranulation"/>
</dbReference>
<dbReference type="Proteomes" id="UP000009136">
    <property type="component" value="Chromosome 13"/>
</dbReference>
<dbReference type="Bgee" id="ENSBTAG00000018784">
    <property type="expression patterns" value="Expressed in lung and 102 other cell types or tissues"/>
</dbReference>
<dbReference type="GO" id="GO:0005615">
    <property type="term" value="C:extracellular space"/>
    <property type="evidence" value="ECO:0000318"/>
    <property type="project" value="GO_Central"/>
</dbReference>
<dbReference type="GO" id="GO:0005764">
    <property type="term" value="C:lysosome"/>
    <property type="evidence" value="ECO:0000318"/>
    <property type="project" value="GO_Central"/>
</dbReference>
<dbReference type="GO" id="GO:0016807">
    <property type="term" value="F:cysteine-type carboxypeptidase activity"/>
    <property type="evidence" value="ECO:0007669"/>
    <property type="project" value="UniProtKB-EC"/>
</dbReference>
<dbReference type="GO" id="GO:0004197">
    <property type="term" value="F:cysteine-type endopeptidase activity"/>
    <property type="evidence" value="ECO:0000318"/>
    <property type="project" value="GO_Central"/>
</dbReference>
<dbReference type="GO" id="GO:0051603">
    <property type="term" value="P:proteolysis involved in protein catabolic process"/>
    <property type="evidence" value="ECO:0000318"/>
    <property type="project" value="GO_Central"/>
</dbReference>
<dbReference type="CDD" id="cd02698">
    <property type="entry name" value="Peptidase_C1A_CathepsinX"/>
    <property type="match status" value="1"/>
</dbReference>
<dbReference type="FunFam" id="3.90.70.10:FF:000060">
    <property type="entry name" value="Cathepsin Z"/>
    <property type="match status" value="1"/>
</dbReference>
<dbReference type="Gene3D" id="3.90.70.10">
    <property type="entry name" value="Cysteine proteinases"/>
    <property type="match status" value="1"/>
</dbReference>
<dbReference type="InterPro" id="IPR033157">
    <property type="entry name" value="CTSZ"/>
</dbReference>
<dbReference type="InterPro" id="IPR038765">
    <property type="entry name" value="Papain-like_cys_pep_sf"/>
</dbReference>
<dbReference type="InterPro" id="IPR025661">
    <property type="entry name" value="Pept_asp_AS"/>
</dbReference>
<dbReference type="InterPro" id="IPR013128">
    <property type="entry name" value="Peptidase_C1A"/>
</dbReference>
<dbReference type="InterPro" id="IPR000668">
    <property type="entry name" value="Peptidase_C1A_C"/>
</dbReference>
<dbReference type="PANTHER" id="PTHR12411">
    <property type="entry name" value="CYSTEINE PROTEASE FAMILY C1-RELATED"/>
    <property type="match status" value="1"/>
</dbReference>
<dbReference type="Pfam" id="PF00112">
    <property type="entry name" value="Peptidase_C1"/>
    <property type="match status" value="1"/>
</dbReference>
<dbReference type="PRINTS" id="PR00705">
    <property type="entry name" value="PAPAIN"/>
</dbReference>
<dbReference type="SMART" id="SM00645">
    <property type="entry name" value="Pept_C1"/>
    <property type="match status" value="1"/>
</dbReference>
<dbReference type="SUPFAM" id="SSF54001">
    <property type="entry name" value="Cysteine proteinases"/>
    <property type="match status" value="1"/>
</dbReference>
<dbReference type="PROSITE" id="PS00640">
    <property type="entry name" value="THIOL_PROTEASE_ASN"/>
    <property type="match status" value="1"/>
</dbReference>
<protein>
    <recommendedName>
        <fullName>Cathepsin Z</fullName>
        <ecNumber evidence="3">3.4.18.1</ecNumber>
    </recommendedName>
</protein>
<proteinExistence type="evidence at transcript level"/>
<reference key="1">
    <citation type="submission" date="2006-08" db="EMBL/GenBank/DDBJ databases">
        <authorList>
            <consortium name="NIH - Mammalian Gene Collection (MGC) project"/>
        </authorList>
    </citation>
    <scope>NUCLEOTIDE SEQUENCE [LARGE SCALE MRNA]</scope>
    <source>
        <strain>Hereford</strain>
        <tissue>Hippocampus</tissue>
    </source>
</reference>
<reference key="2">
    <citation type="journal article" date="1985" name="Biochem. J.">
        <title>Molecular cloning of a bovine cathepsin.</title>
        <authorList>
            <person name="Gay N.J."/>
            <person name="Walker J.E."/>
        </authorList>
    </citation>
    <scope>NUCLEOTIDE SEQUENCE [MRNA] OF 232-304</scope>
</reference>
<reference key="3">
    <citation type="book" date="1986" name="Cysteine proteinases and their inhibitors">
        <title>Cloning of a bovine protein homologous with cysteine proteinases and identification of the gene.</title>
        <editorList>
            <person name="Turk V."/>
        </editorList>
        <authorList>
            <person name="Salvesen G."/>
            <person name="Gay N.J."/>
            <person name="Walker J.E."/>
        </authorList>
    </citation>
    <scope>NUCLEOTIDE SEQUENCE [MRNA] OF 232-304</scope>
</reference>
<evidence type="ECO:0000250" key="1"/>
<evidence type="ECO:0000250" key="2">
    <source>
        <dbReference type="UniProtKB" id="Q9R1T3"/>
    </source>
</evidence>
<evidence type="ECO:0000250" key="3">
    <source>
        <dbReference type="UniProtKB" id="Q9UBR2"/>
    </source>
</evidence>
<evidence type="ECO:0000255" key="4"/>
<evidence type="ECO:0000255" key="5">
    <source>
        <dbReference type="PROSITE-ProRule" id="PRU10090"/>
    </source>
</evidence>
<accession>P05689</accession>
<accession>Q0IIK1</accession>
<comment type="function">
    <text evidence="2 3">Exhibits carboxy-monopeptidase as well as carboxy-dipeptidase activity (By similarity). Capable of producing kinin potentiating peptides (By similarity).</text>
</comment>
<comment type="catalytic activity">
    <reaction evidence="3">
        <text>Release of C-terminal amino acid residues with broad specificity, but lacks action on C-terminal proline. Shows weak endopeptidase activity.</text>
        <dbReference type="EC" id="3.4.18.1"/>
    </reaction>
</comment>
<comment type="activity regulation">
    <text evidence="3">The disulfide bridge formed between Cys-34 in the propeptide and the active site residue Cys-93 may prevent activation of the zymogen through formation of a reversible covalent bond with the active site residue.</text>
</comment>
<comment type="subcellular location">
    <subcellularLocation>
        <location evidence="1">Lysosome</location>
    </subcellularLocation>
</comment>
<comment type="similarity">
    <text evidence="5">Belongs to the peptidase C1 family.</text>
</comment>
<sequence length="304" mass="33886">MASSGPLVPPLLLLLVLLAGAARAGLHFRPGRGCYRPLRGDRLTQLGRRTYPRPHEYLSPSDLPKSWDWRNVNGVNYASVTRNQHIPQYCGSCWAHGSTSAMADRINIKRKGAWPSTLLSVQHVIDCGDAGSCEGGNDLPVWEYAHRHGIPDETCNNYQAKDQECDKFNQCGTCTEFKECHVIKNYTLWKVGDYGSLSGREKMMAEIYTNGPISCGIMATEKMSNYTGGIYSEYNDQAFINHIVSVAGWGVSDGMEYWIVRNSWGEPWGEHGWMRIVTSTYKGGEGARYNLAIEESCTFGDPIV</sequence>
<keyword id="KW-1015">Disulfide bond</keyword>
<keyword id="KW-0325">Glycoprotein</keyword>
<keyword id="KW-0378">Hydrolase</keyword>
<keyword id="KW-0458">Lysosome</keyword>
<keyword id="KW-0645">Protease</keyword>
<keyword id="KW-1185">Reference proteome</keyword>
<keyword id="KW-0732">Signal</keyword>
<keyword id="KW-0788">Thiol protease</keyword>
<keyword id="KW-0865">Zymogen</keyword>
<feature type="signal peptide" evidence="4">
    <location>
        <begin position="1"/>
        <end position="24"/>
    </location>
</feature>
<feature type="propeptide" id="PRO_0000284523" description="Activation peptide" evidence="1">
    <location>
        <begin position="25"/>
        <end position="62"/>
    </location>
</feature>
<feature type="chain" id="PRO_0000050537" description="Cathepsin Z">
    <location>
        <begin position="63"/>
        <end position="304"/>
    </location>
</feature>
<feature type="active site" evidence="5">
    <location>
        <position position="93"/>
    </location>
</feature>
<feature type="active site" evidence="5">
    <location>
        <position position="242"/>
    </location>
</feature>
<feature type="active site" evidence="5">
    <location>
        <position position="262"/>
    </location>
</feature>
<feature type="glycosylation site" description="N-linked (GlcNAc...) asparagine" evidence="4">
    <location>
        <position position="185"/>
    </location>
</feature>
<feature type="glycosylation site" description="N-linked (GlcNAc...) asparagine" evidence="4">
    <location>
        <position position="225"/>
    </location>
</feature>
<feature type="disulfide bond" evidence="3">
    <location>
        <begin position="34"/>
        <end position="93"/>
    </location>
</feature>
<feature type="disulfide bond" evidence="3">
    <location>
        <begin position="90"/>
        <end position="133"/>
    </location>
</feature>
<feature type="disulfide bond" evidence="3">
    <location>
        <begin position="127"/>
        <end position="165"/>
    </location>
</feature>
<feature type="disulfide bond" evidence="3">
    <location>
        <begin position="155"/>
        <end position="171"/>
    </location>
</feature>
<feature type="disulfide bond" evidence="3">
    <location>
        <begin position="174"/>
        <end position="180"/>
    </location>
</feature>
<feature type="disulfide bond" evidence="3">
    <location>
        <begin position="215"/>
        <end position="297"/>
    </location>
</feature>
<organism>
    <name type="scientific">Bos taurus</name>
    <name type="common">Bovine</name>
    <dbReference type="NCBI Taxonomy" id="9913"/>
    <lineage>
        <taxon>Eukaryota</taxon>
        <taxon>Metazoa</taxon>
        <taxon>Chordata</taxon>
        <taxon>Craniata</taxon>
        <taxon>Vertebrata</taxon>
        <taxon>Euteleostomi</taxon>
        <taxon>Mammalia</taxon>
        <taxon>Eutheria</taxon>
        <taxon>Laurasiatheria</taxon>
        <taxon>Artiodactyla</taxon>
        <taxon>Ruminantia</taxon>
        <taxon>Pecora</taxon>
        <taxon>Bovidae</taxon>
        <taxon>Bovinae</taxon>
        <taxon>Bos</taxon>
    </lineage>
</organism>